<accession>B3EUM0</accession>
<gene>
    <name evidence="1" type="primary">rplB</name>
    <name type="ordered locus">Aasi_0194</name>
</gene>
<keyword id="KW-1185">Reference proteome</keyword>
<keyword id="KW-0687">Ribonucleoprotein</keyword>
<keyword id="KW-0689">Ribosomal protein</keyword>
<keyword id="KW-0694">RNA-binding</keyword>
<keyword id="KW-0699">rRNA-binding</keyword>
<dbReference type="EMBL" id="CP001102">
    <property type="protein sequence ID" value="ACE05639.1"/>
    <property type="molecule type" value="Genomic_DNA"/>
</dbReference>
<dbReference type="RefSeq" id="WP_012472404.1">
    <property type="nucleotide sequence ID" value="NC_010830.1"/>
</dbReference>
<dbReference type="SMR" id="B3EUM0"/>
<dbReference type="STRING" id="452471.Aasi_0194"/>
<dbReference type="KEGG" id="aas:Aasi_0194"/>
<dbReference type="eggNOG" id="COG0090">
    <property type="taxonomic scope" value="Bacteria"/>
</dbReference>
<dbReference type="HOGENOM" id="CLU_036235_2_1_10"/>
<dbReference type="OrthoDB" id="9778722at2"/>
<dbReference type="Proteomes" id="UP000001227">
    <property type="component" value="Chromosome"/>
</dbReference>
<dbReference type="GO" id="GO:0015934">
    <property type="term" value="C:large ribosomal subunit"/>
    <property type="evidence" value="ECO:0007669"/>
    <property type="project" value="InterPro"/>
</dbReference>
<dbReference type="GO" id="GO:0019843">
    <property type="term" value="F:rRNA binding"/>
    <property type="evidence" value="ECO:0007669"/>
    <property type="project" value="UniProtKB-UniRule"/>
</dbReference>
<dbReference type="GO" id="GO:0003735">
    <property type="term" value="F:structural constituent of ribosome"/>
    <property type="evidence" value="ECO:0007669"/>
    <property type="project" value="InterPro"/>
</dbReference>
<dbReference type="GO" id="GO:0016740">
    <property type="term" value="F:transferase activity"/>
    <property type="evidence" value="ECO:0007669"/>
    <property type="project" value="InterPro"/>
</dbReference>
<dbReference type="GO" id="GO:0002181">
    <property type="term" value="P:cytoplasmic translation"/>
    <property type="evidence" value="ECO:0007669"/>
    <property type="project" value="TreeGrafter"/>
</dbReference>
<dbReference type="FunFam" id="2.30.30.30:FF:000001">
    <property type="entry name" value="50S ribosomal protein L2"/>
    <property type="match status" value="1"/>
</dbReference>
<dbReference type="FunFam" id="2.40.50.140:FF:000003">
    <property type="entry name" value="50S ribosomal protein L2"/>
    <property type="match status" value="1"/>
</dbReference>
<dbReference type="FunFam" id="4.10.950.10:FF:000001">
    <property type="entry name" value="50S ribosomal protein L2"/>
    <property type="match status" value="1"/>
</dbReference>
<dbReference type="Gene3D" id="2.30.30.30">
    <property type="match status" value="1"/>
</dbReference>
<dbReference type="Gene3D" id="2.40.50.140">
    <property type="entry name" value="Nucleic acid-binding proteins"/>
    <property type="match status" value="1"/>
</dbReference>
<dbReference type="Gene3D" id="4.10.950.10">
    <property type="entry name" value="Ribosomal protein L2, domain 3"/>
    <property type="match status" value="1"/>
</dbReference>
<dbReference type="HAMAP" id="MF_01320_B">
    <property type="entry name" value="Ribosomal_uL2_B"/>
    <property type="match status" value="1"/>
</dbReference>
<dbReference type="InterPro" id="IPR012340">
    <property type="entry name" value="NA-bd_OB-fold"/>
</dbReference>
<dbReference type="InterPro" id="IPR014722">
    <property type="entry name" value="Rib_uL2_dom2"/>
</dbReference>
<dbReference type="InterPro" id="IPR002171">
    <property type="entry name" value="Ribosomal_uL2"/>
</dbReference>
<dbReference type="InterPro" id="IPR005880">
    <property type="entry name" value="Ribosomal_uL2_bac/org-type"/>
</dbReference>
<dbReference type="InterPro" id="IPR022669">
    <property type="entry name" value="Ribosomal_uL2_C"/>
</dbReference>
<dbReference type="InterPro" id="IPR022671">
    <property type="entry name" value="Ribosomal_uL2_CS"/>
</dbReference>
<dbReference type="InterPro" id="IPR014726">
    <property type="entry name" value="Ribosomal_uL2_dom3"/>
</dbReference>
<dbReference type="InterPro" id="IPR022666">
    <property type="entry name" value="Ribosomal_uL2_RNA-bd_dom"/>
</dbReference>
<dbReference type="InterPro" id="IPR008991">
    <property type="entry name" value="Translation_prot_SH3-like_sf"/>
</dbReference>
<dbReference type="NCBIfam" id="TIGR01171">
    <property type="entry name" value="rplB_bact"/>
    <property type="match status" value="1"/>
</dbReference>
<dbReference type="PANTHER" id="PTHR13691:SF5">
    <property type="entry name" value="LARGE RIBOSOMAL SUBUNIT PROTEIN UL2M"/>
    <property type="match status" value="1"/>
</dbReference>
<dbReference type="PANTHER" id="PTHR13691">
    <property type="entry name" value="RIBOSOMAL PROTEIN L2"/>
    <property type="match status" value="1"/>
</dbReference>
<dbReference type="Pfam" id="PF00181">
    <property type="entry name" value="Ribosomal_L2"/>
    <property type="match status" value="1"/>
</dbReference>
<dbReference type="Pfam" id="PF03947">
    <property type="entry name" value="Ribosomal_L2_C"/>
    <property type="match status" value="1"/>
</dbReference>
<dbReference type="PIRSF" id="PIRSF002158">
    <property type="entry name" value="Ribosomal_L2"/>
    <property type="match status" value="1"/>
</dbReference>
<dbReference type="SMART" id="SM01383">
    <property type="entry name" value="Ribosomal_L2"/>
    <property type="match status" value="1"/>
</dbReference>
<dbReference type="SMART" id="SM01382">
    <property type="entry name" value="Ribosomal_L2_C"/>
    <property type="match status" value="1"/>
</dbReference>
<dbReference type="SUPFAM" id="SSF50249">
    <property type="entry name" value="Nucleic acid-binding proteins"/>
    <property type="match status" value="1"/>
</dbReference>
<dbReference type="SUPFAM" id="SSF50104">
    <property type="entry name" value="Translation proteins SH3-like domain"/>
    <property type="match status" value="1"/>
</dbReference>
<dbReference type="PROSITE" id="PS00467">
    <property type="entry name" value="RIBOSOMAL_L2"/>
    <property type="match status" value="1"/>
</dbReference>
<comment type="function">
    <text evidence="1">One of the primary rRNA binding proteins. Required for association of the 30S and 50S subunits to form the 70S ribosome, for tRNA binding and peptide bond formation. It has been suggested to have peptidyltransferase activity; this is somewhat controversial. Makes several contacts with the 16S rRNA in the 70S ribosome.</text>
</comment>
<comment type="subunit">
    <text evidence="1">Part of the 50S ribosomal subunit. Forms a bridge to the 30S subunit in the 70S ribosome.</text>
</comment>
<comment type="similarity">
    <text evidence="1">Belongs to the universal ribosomal protein uL2 family.</text>
</comment>
<organism>
    <name type="scientific">Amoebophilus asiaticus (strain 5a2)</name>
    <dbReference type="NCBI Taxonomy" id="452471"/>
    <lineage>
        <taxon>Bacteria</taxon>
        <taxon>Pseudomonadati</taxon>
        <taxon>Bacteroidota</taxon>
        <taxon>Cytophagia</taxon>
        <taxon>Cytophagales</taxon>
        <taxon>Amoebophilaceae</taxon>
        <taxon>Candidatus Amoebophilus</taxon>
    </lineage>
</organism>
<reference key="1">
    <citation type="journal article" date="2010" name="J. Bacteriol.">
        <title>The genome of the amoeba symbiont 'Candidatus Amoebophilus asiaticus' reveals common mechanisms for host cell interaction among amoeba-associated bacteria.</title>
        <authorList>
            <person name="Schmitz-Esser S."/>
            <person name="Tischler P."/>
            <person name="Arnold R."/>
            <person name="Montanaro J."/>
            <person name="Wagner M."/>
            <person name="Rattei T."/>
            <person name="Horn M."/>
        </authorList>
    </citation>
    <scope>NUCLEOTIDE SEQUENCE [LARGE SCALE GENOMIC DNA]</scope>
    <source>
        <strain>5a2</strain>
    </source>
</reference>
<proteinExistence type="inferred from homology"/>
<sequence length="274" mass="30256">MAVKKIRPLTPGQRFRIAPDFSVLTKTKPEKSLLLPIKSTGGRNNTGKMTIRYKGGGHKKRMRIIDFKRRKYDIPAVVNSIQYDPMRTAYIALLYYVDGAKSYIIAPEGLKVGDRVLSGNNIAPEVGNAMPLRTMPTGTIVHNIELHPGRGAAMARSAGTYAQLLAKEERYVTLKLPSGEMRMVLGECMATVGTVSNSEHNNIVLGKAGRNRWLGRRPRVRGVAMNPVDHPMGGGEGKASGGHPRSRTGLYAKGKKTRNTNKYSKNYILSRKKR</sequence>
<feature type="chain" id="PRO_1000141500" description="Large ribosomal subunit protein uL2">
    <location>
        <begin position="1"/>
        <end position="274"/>
    </location>
</feature>
<feature type="region of interest" description="Disordered" evidence="2">
    <location>
        <begin position="223"/>
        <end position="274"/>
    </location>
</feature>
<evidence type="ECO:0000255" key="1">
    <source>
        <dbReference type="HAMAP-Rule" id="MF_01320"/>
    </source>
</evidence>
<evidence type="ECO:0000256" key="2">
    <source>
        <dbReference type="SAM" id="MobiDB-lite"/>
    </source>
</evidence>
<evidence type="ECO:0000305" key="3"/>
<protein>
    <recommendedName>
        <fullName evidence="1">Large ribosomal subunit protein uL2</fullName>
    </recommendedName>
    <alternativeName>
        <fullName evidence="3">50S ribosomal protein L2</fullName>
    </alternativeName>
</protein>
<name>RL2_AMOA5</name>